<name>HECD1_CAEEL</name>
<comment type="function">
    <text evidence="1 6 7 8 9 10">E3 ubiquitin-protein ligase which accepts ubiquitin from an E2 ubiquitin-conjugating enzyme in the form of a thioester and then directly transfers the ubiquitin to targeted substrates (By similarity). Involved in the ubiquitination and proteasomal-mediated degradation of cytoplasmic and mitochondrial proteins (PubMed:21673654, PubMed:24703696). Positively regulates lin-12 activity in the anchor cell (AC)/vulval precursor (VU) cell fate decision (PubMed:25552605). Negatively regulates glp-1 activity in germline proliferation (PubMed:25552605). May play a role in the formation of fibrous organelles, a hemidesmosome-like structure attaching muscles to the epidermis (PubMed:20153198). Regulates germline DNA double-strand-break repair and apoptosis in response to DNA damage by recruiting E4 ubiquitin-protein ligase ufd-2 to DNA repair foci (PubMed:27669035).</text>
</comment>
<comment type="catalytic activity">
    <reaction evidence="1">
        <text>S-ubiquitinyl-[E2 ubiquitin-conjugating enzyme]-L-cysteine + [acceptor protein]-L-lysine = [E2 ubiquitin-conjugating enzyme]-L-cysteine + N(6)-ubiquitinyl-[acceptor protein]-L-lysine.</text>
        <dbReference type="EC" id="2.3.2.26"/>
    </reaction>
</comment>
<comment type="pathway">
    <text evidence="13 14">Protein modification; protein ubiquitination.</text>
</comment>
<comment type="tissue specificity">
    <text evidence="7">Expressed in most tissues, including hypodermis, muscle, intestine, vulva, and neurons.</text>
</comment>
<comment type="disruption phenotype">
    <text evidence="6 9">RNAi-mediated knockdown causes no visible phenotype (PubMed:20153198). RNAi-mediated knockdown in a glp-1(ar202) mutant background causes an increase in the number of sterile animals (PubMed:25552605). RNAi-mediated knockdown in a vab-10(e698) mutant background causes 50 percent larval lethality associated with the detachment of muscles from the epidermis (PubMed:20153198).</text>
</comment>
<comment type="similarity">
    <text evidence="12">Belongs to the UPL family. K-HECT subfamily.</text>
</comment>
<feature type="chain" id="PRO_0000444432" description="E3 ubiquitin-protein ligase hecd-1">
    <location>
        <begin position="1"/>
        <end position="2648"/>
    </location>
</feature>
<feature type="repeat" description="ANK 1" evidence="2">
    <location>
        <begin position="374"/>
        <end position="403"/>
    </location>
</feature>
<feature type="repeat" description="ANK 2" evidence="2">
    <location>
        <begin position="405"/>
        <end position="434"/>
    </location>
</feature>
<feature type="domain" description="MIB/HERC2" evidence="4">
    <location>
        <begin position="1438"/>
        <end position="1510"/>
    </location>
</feature>
<feature type="domain" description="HECT" evidence="3">
    <location>
        <begin position="2240"/>
        <end position="2648"/>
    </location>
</feature>
<feature type="region of interest" description="Disordered" evidence="5">
    <location>
        <begin position="433"/>
        <end position="494"/>
    </location>
</feature>
<feature type="region of interest" description="Disordered" evidence="5">
    <location>
        <begin position="645"/>
        <end position="714"/>
    </location>
</feature>
<feature type="region of interest" description="Disordered" evidence="5">
    <location>
        <begin position="1376"/>
        <end position="1400"/>
    </location>
</feature>
<feature type="region of interest" description="Disordered" evidence="5">
    <location>
        <begin position="1538"/>
        <end position="1562"/>
    </location>
</feature>
<feature type="region of interest" description="Disordered" evidence="5">
    <location>
        <begin position="1575"/>
        <end position="1629"/>
    </location>
</feature>
<feature type="region of interest" description="Disordered" evidence="5">
    <location>
        <begin position="1652"/>
        <end position="1796"/>
    </location>
</feature>
<feature type="region of interest" description="Disordered" evidence="5">
    <location>
        <begin position="1811"/>
        <end position="1836"/>
    </location>
</feature>
<feature type="compositionally biased region" description="Basic and acidic residues" evidence="5">
    <location>
        <begin position="433"/>
        <end position="455"/>
    </location>
</feature>
<feature type="compositionally biased region" description="Polar residues" evidence="5">
    <location>
        <begin position="478"/>
        <end position="489"/>
    </location>
</feature>
<feature type="compositionally biased region" description="Polar residues" evidence="5">
    <location>
        <begin position="652"/>
        <end position="661"/>
    </location>
</feature>
<feature type="compositionally biased region" description="Polar residues" evidence="5">
    <location>
        <begin position="670"/>
        <end position="688"/>
    </location>
</feature>
<feature type="compositionally biased region" description="Low complexity" evidence="5">
    <location>
        <begin position="696"/>
        <end position="714"/>
    </location>
</feature>
<feature type="compositionally biased region" description="Low complexity" evidence="5">
    <location>
        <begin position="1383"/>
        <end position="1400"/>
    </location>
</feature>
<feature type="compositionally biased region" description="Low complexity" evidence="5">
    <location>
        <begin position="1543"/>
        <end position="1562"/>
    </location>
</feature>
<feature type="compositionally biased region" description="Low complexity" evidence="5">
    <location>
        <begin position="1575"/>
        <end position="1586"/>
    </location>
</feature>
<feature type="compositionally biased region" description="Polar residues" evidence="5">
    <location>
        <begin position="1610"/>
        <end position="1629"/>
    </location>
</feature>
<feature type="compositionally biased region" description="Acidic residues" evidence="5">
    <location>
        <begin position="1653"/>
        <end position="1666"/>
    </location>
</feature>
<feature type="compositionally biased region" description="Low complexity" evidence="5">
    <location>
        <begin position="1667"/>
        <end position="1696"/>
    </location>
</feature>
<feature type="compositionally biased region" description="Acidic residues" evidence="5">
    <location>
        <begin position="1736"/>
        <end position="1746"/>
    </location>
</feature>
<feature type="compositionally biased region" description="Acidic residues" evidence="5">
    <location>
        <begin position="1756"/>
        <end position="1783"/>
    </location>
</feature>
<feature type="compositionally biased region" description="Low complexity" evidence="5">
    <location>
        <begin position="1812"/>
        <end position="1823"/>
    </location>
</feature>
<feature type="active site" description="Glycyl thioester intermediate" evidence="3">
    <location>
        <position position="2617"/>
    </location>
</feature>
<feature type="mutagenesis site" description="In hh2; loss of degradation of ubiquitinated proteins; when associated with 1304-W--N-2648 DEL." evidence="8">
    <original>A</original>
    <variation>T</variation>
    <location>
        <position position="977"/>
    </location>
</feature>
<feature type="mutagenesis site" description="In hh2; loss of degradation of ubiquitinated proteins; when associated with T-977." evidence="8">
    <location>
        <begin position="1304"/>
        <end position="2648"/>
    </location>
</feature>
<feature type="mutagenesis site" description="In hh3; loss of degradation of ubiquitinated proteins." evidence="8">
    <location>
        <begin position="1460"/>
        <end position="2648"/>
    </location>
</feature>
<feature type="mutagenesis site" description="In hh4; loss of degradation of ubiquitinated proteins." evidence="8">
    <location>
        <begin position="2282"/>
        <end position="2648"/>
    </location>
</feature>
<accession>V6CLA2</accession>
<keyword id="KW-0040">ANK repeat</keyword>
<keyword id="KW-1185">Reference proteome</keyword>
<keyword id="KW-0677">Repeat</keyword>
<keyword id="KW-0808">Transferase</keyword>
<keyword id="KW-0833">Ubl conjugation pathway</keyword>
<evidence type="ECO:0000250" key="1">
    <source>
        <dbReference type="UniProtKB" id="Q69ZR2"/>
    </source>
</evidence>
<evidence type="ECO:0000255" key="2"/>
<evidence type="ECO:0000255" key="3">
    <source>
        <dbReference type="PROSITE-ProRule" id="PRU00104"/>
    </source>
</evidence>
<evidence type="ECO:0000255" key="4">
    <source>
        <dbReference type="PROSITE-ProRule" id="PRU00749"/>
    </source>
</evidence>
<evidence type="ECO:0000256" key="5">
    <source>
        <dbReference type="SAM" id="MobiDB-lite"/>
    </source>
</evidence>
<evidence type="ECO:0000269" key="6">
    <source>
    </source>
</evidence>
<evidence type="ECO:0000269" key="7">
    <source>
    </source>
</evidence>
<evidence type="ECO:0000269" key="8">
    <source>
    </source>
</evidence>
<evidence type="ECO:0000269" key="9">
    <source>
    </source>
</evidence>
<evidence type="ECO:0000269" key="10">
    <source>
    </source>
</evidence>
<evidence type="ECO:0000303" key="11">
    <source>
    </source>
</evidence>
<evidence type="ECO:0000305" key="12"/>
<evidence type="ECO:0000305" key="13">
    <source>
    </source>
</evidence>
<evidence type="ECO:0000305" key="14">
    <source>
    </source>
</evidence>
<evidence type="ECO:0000312" key="15">
    <source>
        <dbReference type="Proteomes" id="UP000001940"/>
    </source>
</evidence>
<evidence type="ECO:0000312" key="16">
    <source>
        <dbReference type="WormBase" id="C34D4.14a"/>
    </source>
</evidence>
<organism evidence="15">
    <name type="scientific">Caenorhabditis elegans</name>
    <dbReference type="NCBI Taxonomy" id="6239"/>
    <lineage>
        <taxon>Eukaryota</taxon>
        <taxon>Metazoa</taxon>
        <taxon>Ecdysozoa</taxon>
        <taxon>Nematoda</taxon>
        <taxon>Chromadorea</taxon>
        <taxon>Rhabditida</taxon>
        <taxon>Rhabditina</taxon>
        <taxon>Rhabditomorpha</taxon>
        <taxon>Rhabditoidea</taxon>
        <taxon>Rhabditidae</taxon>
        <taxon>Peloderinae</taxon>
        <taxon>Caenorhabditis</taxon>
    </lineage>
</organism>
<reference evidence="15" key="1">
    <citation type="journal article" date="1998" name="Science">
        <title>Genome sequence of the nematode C. elegans: a platform for investigating biology.</title>
        <authorList>
            <consortium name="The C. elegans sequencing consortium"/>
        </authorList>
    </citation>
    <scope>NUCLEOTIDE SEQUENCE [LARGE SCALE GENOMIC DNA]</scope>
    <source>
        <strain evidence="15">Bristol N2</strain>
    </source>
</reference>
<reference evidence="12" key="2">
    <citation type="journal article" date="2010" name="Curr. Biol.">
        <title>CRT-1/calreticulin and the E3 ligase EEL-1/HUWE1 control hemidesmosome maturation in C. elegans development.</title>
        <authorList>
            <person name="Zahreddine H."/>
            <person name="Zhang H."/>
            <person name="Diogon M."/>
            <person name="Nagamatsu Y."/>
            <person name="Labouesse M."/>
        </authorList>
    </citation>
    <scope>FUNCTION</scope>
    <scope>DISRUPTION PHENOTYPE</scope>
</reference>
<reference evidence="12" key="3">
    <citation type="journal article" date="2011" name="EMBO J.">
        <title>EGF signalling activates the ubiquitin proteasome system to modulate C. elegans lifespan.</title>
        <authorList>
            <person name="Liu G."/>
            <person name="Rogers J."/>
            <person name="Murphy C.T."/>
            <person name="Rongo C."/>
        </authorList>
    </citation>
    <scope>FUNCTION</scope>
    <scope>PATHWAY</scope>
    <scope>TISSUE SPECIFICITY</scope>
</reference>
<reference evidence="12" key="4">
    <citation type="journal article" date="2014" name="Cell Metab.">
        <title>Pathogenesis of human mitochondrial diseases is modulated by reduced activity of the ubiquitin/proteasome system.</title>
        <authorList>
            <person name="Segref A."/>
            <person name="Kevei E."/>
            <person name="Pokrzywa W."/>
            <person name="Schmeisser K."/>
            <person name="Mansfeld J."/>
            <person name="Livnat-Levanon N."/>
            <person name="Ensenauer R."/>
            <person name="Glickman M.H."/>
            <person name="Ristow M."/>
            <person name="Hoppe T."/>
        </authorList>
    </citation>
    <scope>FUNCTION</scope>
    <scope>PATHWAY</scope>
    <scope>MUTAGENESIS OF ALA-977; 1304-TRP--ASN-2648; 1460-TRP--ASN-2648 AND 2282-TRP--ASN-2648</scope>
</reference>
<reference evidence="12" key="5">
    <citation type="journal article" date="2014" name="G3 (Bethesda)">
        <title>hecd-1 modulates notch activity in Caenorhabditis elegans.</title>
        <authorList>
            <person name="Chen Y."/>
            <person name="Greenwald I."/>
        </authorList>
    </citation>
    <scope>FUNCTION</scope>
    <scope>DISRUPTION PHENOTYPE</scope>
</reference>
<reference evidence="12" key="6">
    <citation type="journal article" date="2016" name="Nat. Struct. Mol. Biol.">
        <title>E4 ligase-specific ubiquitination hubs coordinate DNA double-strand-break repair and apoptosis.</title>
        <authorList>
            <person name="Ackermann L."/>
            <person name="Schell M."/>
            <person name="Pokrzywa W."/>
            <person name="Kevei E."/>
            <person name="Gartner A."/>
            <person name="Schumacher B."/>
            <person name="Hoppe T."/>
        </authorList>
    </citation>
    <scope>FUNCTION</scope>
</reference>
<sequence length="2648" mass="292210">MDGIDPETLLEWLQTGIGDERDLQLMALEQLCMLLLMADNIDRCFESCPPRTFIPALCKIFIDETAPDNVLEVTARAITYYLDVSNECTRRITQVDGAVKAICTRLAAADISDRSSKDLAEQCVKLLEHVCQRETMAVYDAGGINAMLTLVRVHGTQVHKDTMHSAMSVVTRLCGKMEPTDPELGKCAESLGALLEHEDPKVSESALRCFAALTDRFVRKMMDPAELAMHSNLVEHLISIMVASNDENSPTTASANILSIVLSLIGNLCRGSSLITEKVLTSPNMITGLKATLTNKEERVVTDGLRFCDLLLVLLCEGRSALPLTSVVSGDYAAGSGAERVHRQLIDAIRQKDLTALVDAIESGQVDVNFADDVGQSLTNWASAFGSIEMVQYLCDKGSDVNKGHKSSSLHYAACFGRPDVVKLLLQRGANPDLRDEDGKTALDKARERSDDDHNQVANILESPSAFMRNKEDPKVKASTSKQPGTSTKPELPNPNLVRKVLHQLLPIFCEIFQKSLNGSVRRTSLSLMRKIVENIGDLRQSAVGDGNAPAAQSARKMSTDVSAGAESLVAVVVSVMDQEDDHEGHEQVLLILESLLEKDAELWVIELVRLGVFERVEAMAKEPPKGLEEVLNAIHLEGRSRVTPMEIDFENQPSSSTAVPTANDIMDTTVPSSSGGADAESNSNPSTIEMADPESSTPSSSTQQSISKPKATASSTASSAILQVVSKLSSVASLDKSAAAVDKKPTKTVLSQGTPYRWKEWRIVRGTTSLFIWSDVLLIELPFQSNGWFRYLADNDSHVQFVTGTASVDQQMTEEEKDNFQKTERREMVSRWNAVKGVFDDDWSSVPIAVLGIPSNAKKVSQKLEVPAWELWSSKSSELQIKSISSSAPTGQANTMLTTIKDDAGGFLFETGTGRKTNVMPEHALPSDFHTGWSSHGVSTRKMKFRQDIQKRKVQELAWKLWNDHLKEAHAKPREALVRLENAARTIESTIRHVKAQSNFKHRNVKQPRIERVQEYCAAISTLHESIVDDRRLSTFEFSVSGIVPALFGLLSMMEKFPDSFPSRIFKEQFSKGEALSYLALKIVAVLEANEKFPQHLYDSPGGSSFGLQLLSRRVRTKLEMLPRADGKENNDENLVNKTGKIVKCEPLASVGAIRAYLHRMVTRQWHDRERANYRYVKEIQELKTKGKSIELRHVSDFDENGVIYWIGTNGRAAPLWTNPATVKAVKITCSDTRQPFGKPEDLLSRDQNPINCHTSDDKNAHFTIDLGLFVVPTSYSLRHSRGYGRSALRNWMLQGSVDAKRWENVIVHTDDKGLGEPGSTATWHVGEKGTTAFRFFRIAQNGKNSSGQTHYLSCSGFEIYGDIVDVVTEAICEDPPKKDSPAGTSSTPGSSSSAALPPLTKEQVLEMLPARENNNRLKSGLSLETVTSMLQRSRHRSRGSYKISESKSKVVRGKDWRWEDQDGGEGKFGRITSPPESGWVDVTWDNGNANSYRFGANGNFDIERVTSTGHRYSTPSLASHVPTSVMEAVRRNRAFYTPKTTGGPPSSSVFGTSSSAGSSRGAASALSRFASVKNTTPAGTPSSGGSSGGAIGKKSMSTTNLVDERQKTSGPSVASTGQAASAESLQHQTPSLENLLARAMPHAFGRIAENQEPEDEPMGGEESDSAASMRSAASSNSQMSMGSSSQQQQQQDSDMTPRDSAGTPSTPRDDKNQTLSVSAPDLAAARQRQASAETDGDADADETNSEDKTVGADDAMEEDDEEEETMEDEEDDDDDDDDESSNENQEKLVELLGGERGLFDKLKEVITGESLSDASSSAKDATTNEAQKKGGKKPKKWFKKMSSYTDVLKGLMQNRYPVALLDPAAAGIEMDEMMDDDDYYDFSEDGPDDGDSVEDEVAAHLGMPVDSFASMVAARTPITWRQFSELMSGSNRERAAMARAVASSRGSPWEDDATVKCTFEALIPAFDPRPGRSNVNQTLEVELPTVVKDFGSTKASSSKIDKDDQMRFFLRGPNMSGVDNVTIEMNDDSASLFRYMQIINNSVNWATKSDRSRRIWEPTYSICYCSADQTNVEVSKIPDEESSTPCQVNQCLETIGLLSRIQQAMPEAEITPNVFISDKLTLKVTQVLSDALVVAARSLPEWCSRLVYKYPCLFTVETRNMYMQATAFGVSRTIVWLQQRRDAAVERARGSAQAGNSSAARQHDRYHEYRVGRLRHERVKVTRAEETLLDQAIRLMKFHADRKAVLEIEYTNEEGTGLGPTLEFYALVAAELQRKSLALWVCDDDDTHASKSGEEREVDLGEGKKPIGYYVRRVGGLFPAPLPPGTDETKRAADMFRVLGVFLAKVLLDGRLVDLPLSRPFLKLLVHPQIGDDARGPNLHKILSLDDFEEVNPVKGSFLKELRALAQRKRLIENDTSIDSNSKRRKIAELKLHIKGSTCRVEDLALNFTVNPPSKVFQYAEMELVDGGSDIDVTIDNVEQYVEKCEEFYLNTGIAYQMRAFRDGFDRVFPLRTLRAYSPEEVQRLLSGEQCPEWSRDDILNYTEPKLGYTRESPGFLRFVDVMEALTAQERKNFLQFATGCSSLPPGGLANLHPRLTIVRKVESGDGSYPSVNTCVHYLKLPEYSSSAILRERLLTAINEKGFHLN</sequence>
<proteinExistence type="evidence at protein level"/>
<protein>
    <recommendedName>
        <fullName evidence="12">E3 ubiquitin-protein ligase hecd-1</fullName>
        <ecNumber evidence="1">2.3.2.26</ecNumber>
    </recommendedName>
</protein>
<gene>
    <name evidence="11 16" type="primary">hecd-1</name>
    <name evidence="16" type="ORF">C34D4.14</name>
</gene>
<dbReference type="EC" id="2.3.2.26" evidence="1"/>
<dbReference type="EMBL" id="BX284604">
    <property type="protein sequence ID" value="CDK13339.1"/>
    <property type="molecule type" value="Genomic_DNA"/>
</dbReference>
<dbReference type="RefSeq" id="NP_001293688.1">
    <property type="nucleotide sequence ID" value="NM_001306759.2"/>
</dbReference>
<dbReference type="SMR" id="V6CLA2"/>
<dbReference type="FunCoup" id="V6CLA2">
    <property type="interactions" value="3292"/>
</dbReference>
<dbReference type="STRING" id="6239.C34D4.14f.1"/>
<dbReference type="PaxDb" id="6239-C34D4.14"/>
<dbReference type="PeptideAtlas" id="V6CLA2"/>
<dbReference type="EnsemblMetazoa" id="C34D4.14a.1">
    <property type="protein sequence ID" value="C34D4.14a.1"/>
    <property type="gene ID" value="WBGene00016405"/>
</dbReference>
<dbReference type="EnsemblMetazoa" id="C34D4.14a.2">
    <property type="protein sequence ID" value="C34D4.14a.2"/>
    <property type="gene ID" value="WBGene00016405"/>
</dbReference>
<dbReference type="GeneID" id="177486"/>
<dbReference type="KEGG" id="cel:CELE_C34D4.14"/>
<dbReference type="AGR" id="WB:WBGene00016405"/>
<dbReference type="CTD" id="177486"/>
<dbReference type="WormBase" id="C34D4.14a">
    <property type="protein sequence ID" value="CE49267"/>
    <property type="gene ID" value="WBGene00016405"/>
    <property type="gene designation" value="hecd-1"/>
</dbReference>
<dbReference type="HOGENOM" id="CLU_000869_0_0_1"/>
<dbReference type="InParanoid" id="V6CLA2"/>
<dbReference type="OrthoDB" id="412600at2759"/>
<dbReference type="Reactome" id="R-CEL-983168">
    <property type="pathway name" value="Antigen processing: Ubiquitination &amp; Proteasome degradation"/>
</dbReference>
<dbReference type="UniPathway" id="UPA00143"/>
<dbReference type="PRO" id="PR:V6CLA2"/>
<dbReference type="Proteomes" id="UP000001940">
    <property type="component" value="Chromosome IV"/>
</dbReference>
<dbReference type="Bgee" id="WBGene00016405">
    <property type="expression patterns" value="Expressed in pharyngeal muscle cell (C elegans) and 4 other cell types or tissues"/>
</dbReference>
<dbReference type="ExpressionAtlas" id="V6CLA2">
    <property type="expression patterns" value="baseline and differential"/>
</dbReference>
<dbReference type="GO" id="GO:0016607">
    <property type="term" value="C:nuclear speck"/>
    <property type="evidence" value="ECO:0000318"/>
    <property type="project" value="GO_Central"/>
</dbReference>
<dbReference type="GO" id="GO:0046872">
    <property type="term" value="F:metal ion binding"/>
    <property type="evidence" value="ECO:0007669"/>
    <property type="project" value="InterPro"/>
</dbReference>
<dbReference type="GO" id="GO:0061630">
    <property type="term" value="F:ubiquitin protein ligase activity"/>
    <property type="evidence" value="ECO:0000318"/>
    <property type="project" value="GO_Central"/>
</dbReference>
<dbReference type="GO" id="GO:0045746">
    <property type="term" value="P:negative regulation of Notch signaling pathway"/>
    <property type="evidence" value="ECO:0000315"/>
    <property type="project" value="UniProtKB"/>
</dbReference>
<dbReference type="GO" id="GO:0045747">
    <property type="term" value="P:positive regulation of Notch signaling pathway"/>
    <property type="evidence" value="ECO:0000315"/>
    <property type="project" value="UniProtKB"/>
</dbReference>
<dbReference type="GO" id="GO:0032436">
    <property type="term" value="P:positive regulation of proteasomal ubiquitin-dependent protein catabolic process"/>
    <property type="evidence" value="ECO:0000315"/>
    <property type="project" value="UniProtKB"/>
</dbReference>
<dbReference type="GO" id="GO:0043161">
    <property type="term" value="P:proteasome-mediated ubiquitin-dependent protein catabolic process"/>
    <property type="evidence" value="ECO:0000315"/>
    <property type="project" value="UniProtKB"/>
</dbReference>
<dbReference type="GO" id="GO:0000209">
    <property type="term" value="P:protein polyubiquitination"/>
    <property type="evidence" value="ECO:0000318"/>
    <property type="project" value="GO_Central"/>
</dbReference>
<dbReference type="GO" id="GO:0042659">
    <property type="term" value="P:regulation of cell fate specification"/>
    <property type="evidence" value="ECO:0000316"/>
    <property type="project" value="UniProtKB"/>
</dbReference>
<dbReference type="GO" id="GO:1905936">
    <property type="term" value="P:regulation of germ cell proliferation"/>
    <property type="evidence" value="ECO:0000316"/>
    <property type="project" value="UniProtKB"/>
</dbReference>
<dbReference type="GO" id="GO:1902882">
    <property type="term" value="P:regulation of response to oxidative stress"/>
    <property type="evidence" value="ECO:0000315"/>
    <property type="project" value="UniProtKB"/>
</dbReference>
<dbReference type="GO" id="GO:0040028">
    <property type="term" value="P:regulation of vulval development"/>
    <property type="evidence" value="ECO:0000316"/>
    <property type="project" value="UniProtKB"/>
</dbReference>
<dbReference type="CDD" id="cd00078">
    <property type="entry name" value="HECTc"/>
    <property type="match status" value="1"/>
</dbReference>
<dbReference type="FunFam" id="2.30.30.40:FF:000320">
    <property type="entry name" value="E3 ubiquitin-protein ligase hecd-1"/>
    <property type="match status" value="1"/>
</dbReference>
<dbReference type="FunFam" id="3.90.1750.10:FF:000033">
    <property type="entry name" value="E3 ubiquitin-protein ligase hecd-1"/>
    <property type="match status" value="1"/>
</dbReference>
<dbReference type="FunFam" id="1.25.10.10:FF:000051">
    <property type="entry name" value="E3 ubiquitin-protein ligase HECTD1 isoform X1"/>
    <property type="match status" value="1"/>
</dbReference>
<dbReference type="FunFam" id="1.25.40.20:FF:000033">
    <property type="entry name" value="E3 ubiquitin-protein ligase HECTD1 isoform X2"/>
    <property type="match status" value="1"/>
</dbReference>
<dbReference type="FunFam" id="3.30.2410.10:FF:000007">
    <property type="entry name" value="Putative E3 ubiquitin-protein ligase HECTD1"/>
    <property type="match status" value="1"/>
</dbReference>
<dbReference type="Gene3D" id="1.25.40.20">
    <property type="entry name" value="Ankyrin repeat-containing domain"/>
    <property type="match status" value="1"/>
</dbReference>
<dbReference type="Gene3D" id="2.60.120.260">
    <property type="entry name" value="Galactose-binding domain-like"/>
    <property type="match status" value="1"/>
</dbReference>
<dbReference type="Gene3D" id="3.30.2160.10">
    <property type="entry name" value="Hect, E3 ligase catalytic domain"/>
    <property type="match status" value="1"/>
</dbReference>
<dbReference type="Gene3D" id="3.30.2410.10">
    <property type="entry name" value="Hect, E3 ligase catalytic domain"/>
    <property type="match status" value="1"/>
</dbReference>
<dbReference type="Gene3D" id="3.90.1750.10">
    <property type="entry name" value="Hect, E3 ligase catalytic domains"/>
    <property type="match status" value="2"/>
</dbReference>
<dbReference type="Gene3D" id="1.25.10.10">
    <property type="entry name" value="Leucine-rich Repeat Variant"/>
    <property type="match status" value="1"/>
</dbReference>
<dbReference type="Gene3D" id="2.30.30.40">
    <property type="entry name" value="SH3 Domains"/>
    <property type="match status" value="1"/>
</dbReference>
<dbReference type="InterPro" id="IPR002110">
    <property type="entry name" value="Ankyrin_rpt"/>
</dbReference>
<dbReference type="InterPro" id="IPR036770">
    <property type="entry name" value="Ankyrin_rpt-contain_sf"/>
</dbReference>
<dbReference type="InterPro" id="IPR011989">
    <property type="entry name" value="ARM-like"/>
</dbReference>
<dbReference type="InterPro" id="IPR016024">
    <property type="entry name" value="ARM-type_fold"/>
</dbReference>
<dbReference type="InterPro" id="IPR008979">
    <property type="entry name" value="Galactose-bd-like_sf"/>
</dbReference>
<dbReference type="InterPro" id="IPR000569">
    <property type="entry name" value="HECT_dom"/>
</dbReference>
<dbReference type="InterPro" id="IPR035983">
    <property type="entry name" value="Hect_E3_ubiquitin_ligase"/>
</dbReference>
<dbReference type="InterPro" id="IPR045322">
    <property type="entry name" value="HECTD1/TRIP12-like"/>
</dbReference>
<dbReference type="InterPro" id="IPR010606">
    <property type="entry name" value="Mib_Herc2"/>
</dbReference>
<dbReference type="InterPro" id="IPR037252">
    <property type="entry name" value="Mib_Herc2_sf"/>
</dbReference>
<dbReference type="InterPro" id="IPR012919">
    <property type="entry name" value="SUN_dom"/>
</dbReference>
<dbReference type="PANTHER" id="PTHR45670:SF1">
    <property type="entry name" value="E3 UBIQUITIN-PROTEIN LIGASE HECTD1"/>
    <property type="match status" value="1"/>
</dbReference>
<dbReference type="PANTHER" id="PTHR45670">
    <property type="entry name" value="E3 UBIQUITIN-PROTEIN LIGASE TRIP12"/>
    <property type="match status" value="1"/>
</dbReference>
<dbReference type="Pfam" id="PF12796">
    <property type="entry name" value="Ank_2"/>
    <property type="match status" value="1"/>
</dbReference>
<dbReference type="Pfam" id="PF00632">
    <property type="entry name" value="HECT"/>
    <property type="match status" value="1"/>
</dbReference>
<dbReference type="Pfam" id="PF06701">
    <property type="entry name" value="MIB_HERC2"/>
    <property type="match status" value="1"/>
</dbReference>
<dbReference type="Pfam" id="PF07738">
    <property type="entry name" value="Sad1_UNC"/>
    <property type="match status" value="1"/>
</dbReference>
<dbReference type="SMART" id="SM00248">
    <property type="entry name" value="ANK"/>
    <property type="match status" value="2"/>
</dbReference>
<dbReference type="SMART" id="SM00119">
    <property type="entry name" value="HECTc"/>
    <property type="match status" value="1"/>
</dbReference>
<dbReference type="SUPFAM" id="SSF48403">
    <property type="entry name" value="Ankyrin repeat"/>
    <property type="match status" value="1"/>
</dbReference>
<dbReference type="SUPFAM" id="SSF48371">
    <property type="entry name" value="ARM repeat"/>
    <property type="match status" value="1"/>
</dbReference>
<dbReference type="SUPFAM" id="SSF49785">
    <property type="entry name" value="Galactose-binding domain-like"/>
    <property type="match status" value="1"/>
</dbReference>
<dbReference type="SUPFAM" id="SSF56204">
    <property type="entry name" value="Hect, E3 ligase catalytic domain"/>
    <property type="match status" value="1"/>
</dbReference>
<dbReference type="SUPFAM" id="SSF159034">
    <property type="entry name" value="Mib/herc2 domain-like"/>
    <property type="match status" value="1"/>
</dbReference>
<dbReference type="PROSITE" id="PS50297">
    <property type="entry name" value="ANK_REP_REGION"/>
    <property type="match status" value="1"/>
</dbReference>
<dbReference type="PROSITE" id="PS50088">
    <property type="entry name" value="ANK_REPEAT"/>
    <property type="match status" value="1"/>
</dbReference>
<dbReference type="PROSITE" id="PS50237">
    <property type="entry name" value="HECT"/>
    <property type="match status" value="1"/>
</dbReference>
<dbReference type="PROSITE" id="PS51416">
    <property type="entry name" value="MIB_HERC2"/>
    <property type="match status" value="1"/>
</dbReference>